<keyword id="KW-0067">ATP-binding</keyword>
<keyword id="KW-0963">Cytoplasm</keyword>
<keyword id="KW-0227">DNA damage</keyword>
<keyword id="KW-0233">DNA recombination</keyword>
<keyword id="KW-0234">DNA repair</keyword>
<keyword id="KW-0238">DNA-binding</keyword>
<keyword id="KW-0378">Hydrolase</keyword>
<keyword id="KW-0547">Nucleotide-binding</keyword>
<evidence type="ECO:0000255" key="1">
    <source>
        <dbReference type="HAMAP-Rule" id="MF_00016"/>
    </source>
</evidence>
<organism>
    <name type="scientific">Wolbachia pipientis wMel</name>
    <dbReference type="NCBI Taxonomy" id="163164"/>
    <lineage>
        <taxon>Bacteria</taxon>
        <taxon>Pseudomonadati</taxon>
        <taxon>Pseudomonadota</taxon>
        <taxon>Alphaproteobacteria</taxon>
        <taxon>Rickettsiales</taxon>
        <taxon>Anaplasmataceae</taxon>
        <taxon>Wolbachieae</taxon>
        <taxon>Wolbachia</taxon>
    </lineage>
</organism>
<accession>P61539</accession>
<proteinExistence type="inferred from homology"/>
<sequence length="326" mass="36590">MKSISCGKEYTEDVRNINIRPEQLDDFVGQKDLIQNLKVFINAAQTRTEALDHVLLYGPPGLGKTTLAQIVSKELRVSFRATSGPLLSKAGDLAAVLTTLNAKDVLFIDEIHRLNRSIEEVLYTAMEDFCLDILVGEGPSTRTLRIDLPPFTLIGATTRLGLLSAPLRDRFGIPLHLEFYSFEELVNIIKRGARVLSAEIEEDAAREIACRARGTPRIALRLLRRIRDFVEVKDDKKITYEVADSVLLKLGVDKMGLNKLDMNYLRFLFNTSGPVGIDTISIALSEDVGNIEETVEPYLIKISFVKRTPRGRVLTDQAKEYLSFQH</sequence>
<feature type="chain" id="PRO_0000165631" description="Holliday junction branch migration complex subunit RuvB">
    <location>
        <begin position="1"/>
        <end position="326"/>
    </location>
</feature>
<feature type="region of interest" description="Large ATPase domain (RuvB-L)" evidence="1">
    <location>
        <begin position="1"/>
        <end position="180"/>
    </location>
</feature>
<feature type="region of interest" description="Small ATPAse domain (RuvB-S)" evidence="1">
    <location>
        <begin position="181"/>
        <end position="251"/>
    </location>
</feature>
<feature type="region of interest" description="Head domain (RuvB-H)" evidence="1">
    <location>
        <begin position="254"/>
        <end position="326"/>
    </location>
</feature>
<feature type="binding site" evidence="1">
    <location>
        <position position="19"/>
    </location>
    <ligand>
        <name>ATP</name>
        <dbReference type="ChEBI" id="CHEBI:30616"/>
    </ligand>
</feature>
<feature type="binding site" evidence="1">
    <location>
        <position position="20"/>
    </location>
    <ligand>
        <name>ATP</name>
        <dbReference type="ChEBI" id="CHEBI:30616"/>
    </ligand>
</feature>
<feature type="binding site" evidence="1">
    <location>
        <position position="61"/>
    </location>
    <ligand>
        <name>ATP</name>
        <dbReference type="ChEBI" id="CHEBI:30616"/>
    </ligand>
</feature>
<feature type="binding site" evidence="1">
    <location>
        <position position="64"/>
    </location>
    <ligand>
        <name>ATP</name>
        <dbReference type="ChEBI" id="CHEBI:30616"/>
    </ligand>
</feature>
<feature type="binding site" evidence="1">
    <location>
        <position position="65"/>
    </location>
    <ligand>
        <name>ATP</name>
        <dbReference type="ChEBI" id="CHEBI:30616"/>
    </ligand>
</feature>
<feature type="binding site" evidence="1">
    <location>
        <position position="65"/>
    </location>
    <ligand>
        <name>Mg(2+)</name>
        <dbReference type="ChEBI" id="CHEBI:18420"/>
    </ligand>
</feature>
<feature type="binding site" evidence="1">
    <location>
        <position position="66"/>
    </location>
    <ligand>
        <name>ATP</name>
        <dbReference type="ChEBI" id="CHEBI:30616"/>
    </ligand>
</feature>
<feature type="binding site" evidence="1">
    <location>
        <begin position="127"/>
        <end position="129"/>
    </location>
    <ligand>
        <name>ATP</name>
        <dbReference type="ChEBI" id="CHEBI:30616"/>
    </ligand>
</feature>
<feature type="binding site" evidence="1">
    <location>
        <position position="170"/>
    </location>
    <ligand>
        <name>ATP</name>
        <dbReference type="ChEBI" id="CHEBI:30616"/>
    </ligand>
</feature>
<feature type="binding site" evidence="1">
    <location>
        <position position="180"/>
    </location>
    <ligand>
        <name>ATP</name>
        <dbReference type="ChEBI" id="CHEBI:30616"/>
    </ligand>
</feature>
<feature type="binding site" evidence="1">
    <location>
        <position position="217"/>
    </location>
    <ligand>
        <name>ATP</name>
        <dbReference type="ChEBI" id="CHEBI:30616"/>
    </ligand>
</feature>
<feature type="binding site" evidence="1">
    <location>
        <position position="307"/>
    </location>
    <ligand>
        <name>DNA</name>
        <dbReference type="ChEBI" id="CHEBI:16991"/>
    </ligand>
</feature>
<feature type="binding site" evidence="1">
    <location>
        <position position="312"/>
    </location>
    <ligand>
        <name>DNA</name>
        <dbReference type="ChEBI" id="CHEBI:16991"/>
    </ligand>
</feature>
<protein>
    <recommendedName>
        <fullName evidence="1">Holliday junction branch migration complex subunit RuvB</fullName>
        <ecNumber evidence="1">3.6.4.-</ecNumber>
    </recommendedName>
</protein>
<comment type="function">
    <text evidence="1">The RuvA-RuvB-RuvC complex processes Holliday junction (HJ) DNA during genetic recombination and DNA repair, while the RuvA-RuvB complex plays an important role in the rescue of blocked DNA replication forks via replication fork reversal (RFR). RuvA specifically binds to HJ cruciform DNA, conferring on it an open structure. The RuvB hexamer acts as an ATP-dependent pump, pulling dsDNA into and through the RuvAB complex. RuvB forms 2 homohexamers on either side of HJ DNA bound by 1 or 2 RuvA tetramers; 4 subunits per hexamer contact DNA at a time. Coordinated motions by a converter formed by DNA-disengaged RuvB subunits stimulates ATP hydrolysis and nucleotide exchange. Immobilization of the converter enables RuvB to convert the ATP-contained energy into a lever motion, pulling 2 nucleotides of DNA out of the RuvA tetramer per ATP hydrolyzed, thus driving DNA branch migration. The RuvB motors rotate together with the DNA substrate, which together with the progressing nucleotide cycle form the mechanistic basis for DNA recombination by continuous HJ branch migration. Branch migration allows RuvC to scan DNA until it finds its consensus sequence, where it cleaves and resolves cruciform DNA.</text>
</comment>
<comment type="catalytic activity">
    <reaction evidence="1">
        <text>ATP + H2O = ADP + phosphate + H(+)</text>
        <dbReference type="Rhea" id="RHEA:13065"/>
        <dbReference type="ChEBI" id="CHEBI:15377"/>
        <dbReference type="ChEBI" id="CHEBI:15378"/>
        <dbReference type="ChEBI" id="CHEBI:30616"/>
        <dbReference type="ChEBI" id="CHEBI:43474"/>
        <dbReference type="ChEBI" id="CHEBI:456216"/>
    </reaction>
</comment>
<comment type="subunit">
    <text evidence="1">Homohexamer. Forms an RuvA(8)-RuvB(12)-Holliday junction (HJ) complex. HJ DNA is sandwiched between 2 RuvA tetramers; dsDNA enters through RuvA and exits via RuvB. An RuvB hexamer assembles on each DNA strand where it exits the tetramer. Each RuvB hexamer is contacted by two RuvA subunits (via domain III) on 2 adjacent RuvB subunits; this complex drives branch migration. In the full resolvosome a probable DNA-RuvA(4)-RuvB(12)-RuvC(2) complex forms which resolves the HJ.</text>
</comment>
<comment type="subcellular location">
    <subcellularLocation>
        <location evidence="1">Cytoplasm</location>
    </subcellularLocation>
</comment>
<comment type="domain">
    <text evidence="1">Has 3 domains, the large (RuvB-L) and small ATPase (RuvB-S) domains and the C-terminal head (RuvB-H) domain. The head domain binds DNA, while the ATPase domains jointly bind ATP, ADP or are empty depending on the state of the subunit in the translocation cycle. During a single DNA translocation step the structure of each domain remains the same, but their relative positions change.</text>
</comment>
<comment type="similarity">
    <text evidence="1">Belongs to the RuvB family.</text>
</comment>
<gene>
    <name evidence="1" type="primary">ruvB</name>
    <name type="ordered locus">WD_1112</name>
</gene>
<name>RUVB_WOLPM</name>
<reference key="1">
    <citation type="journal article" date="2004" name="PLoS Biol.">
        <title>Phylogenomics of the reproductive parasite Wolbachia pipientis wMel: a streamlined genome overrun by mobile genetic elements.</title>
        <authorList>
            <person name="Wu M."/>
            <person name="Sun L.V."/>
            <person name="Vamathevan J.J."/>
            <person name="Riegler M."/>
            <person name="DeBoy R.T."/>
            <person name="Brownlie J.C."/>
            <person name="McGraw E.A."/>
            <person name="Martin W."/>
            <person name="Esser C."/>
            <person name="Ahmadinejad N."/>
            <person name="Wiegand C."/>
            <person name="Madupu R."/>
            <person name="Beanan M.J."/>
            <person name="Brinkac L.M."/>
            <person name="Daugherty S.C."/>
            <person name="Durkin A.S."/>
            <person name="Kolonay J.F."/>
            <person name="Nelson W.C."/>
            <person name="Mohamoud Y."/>
            <person name="Lee P."/>
            <person name="Berry K.J."/>
            <person name="Young M.B."/>
            <person name="Utterback T.R."/>
            <person name="Weidman J.F."/>
            <person name="Nierman W.C."/>
            <person name="Paulsen I.T."/>
            <person name="Nelson K.E."/>
            <person name="Tettelin H."/>
            <person name="O'Neill S.L."/>
            <person name="Eisen J.A."/>
        </authorList>
    </citation>
    <scope>NUCLEOTIDE SEQUENCE [LARGE SCALE GENOMIC DNA]</scope>
</reference>
<dbReference type="EC" id="3.6.4.-" evidence="1"/>
<dbReference type="EMBL" id="AE017196">
    <property type="protein sequence ID" value="AAS14766.1"/>
    <property type="molecule type" value="Genomic_DNA"/>
</dbReference>
<dbReference type="RefSeq" id="WP_010963048.1">
    <property type="nucleotide sequence ID" value="NZ_OX384529.1"/>
</dbReference>
<dbReference type="SMR" id="P61539"/>
<dbReference type="EnsemblBacteria" id="AAS14766">
    <property type="protein sequence ID" value="AAS14766"/>
    <property type="gene ID" value="WD_1112"/>
</dbReference>
<dbReference type="GeneID" id="70036584"/>
<dbReference type="KEGG" id="wol:WD_1112"/>
<dbReference type="eggNOG" id="COG2255">
    <property type="taxonomic scope" value="Bacteria"/>
</dbReference>
<dbReference type="Proteomes" id="UP000008215">
    <property type="component" value="Chromosome"/>
</dbReference>
<dbReference type="GO" id="GO:0005737">
    <property type="term" value="C:cytoplasm"/>
    <property type="evidence" value="ECO:0007669"/>
    <property type="project" value="UniProtKB-SubCell"/>
</dbReference>
<dbReference type="GO" id="GO:0048476">
    <property type="term" value="C:Holliday junction resolvase complex"/>
    <property type="evidence" value="ECO:0007669"/>
    <property type="project" value="UniProtKB-UniRule"/>
</dbReference>
<dbReference type="GO" id="GO:0005524">
    <property type="term" value="F:ATP binding"/>
    <property type="evidence" value="ECO:0007669"/>
    <property type="project" value="UniProtKB-UniRule"/>
</dbReference>
<dbReference type="GO" id="GO:0016887">
    <property type="term" value="F:ATP hydrolysis activity"/>
    <property type="evidence" value="ECO:0007669"/>
    <property type="project" value="InterPro"/>
</dbReference>
<dbReference type="GO" id="GO:0000400">
    <property type="term" value="F:four-way junction DNA binding"/>
    <property type="evidence" value="ECO:0007669"/>
    <property type="project" value="UniProtKB-UniRule"/>
</dbReference>
<dbReference type="GO" id="GO:0009378">
    <property type="term" value="F:four-way junction helicase activity"/>
    <property type="evidence" value="ECO:0007669"/>
    <property type="project" value="InterPro"/>
</dbReference>
<dbReference type="GO" id="GO:0006310">
    <property type="term" value="P:DNA recombination"/>
    <property type="evidence" value="ECO:0007669"/>
    <property type="project" value="UniProtKB-UniRule"/>
</dbReference>
<dbReference type="GO" id="GO:0006281">
    <property type="term" value="P:DNA repair"/>
    <property type="evidence" value="ECO:0007669"/>
    <property type="project" value="UniProtKB-UniRule"/>
</dbReference>
<dbReference type="CDD" id="cd00009">
    <property type="entry name" value="AAA"/>
    <property type="match status" value="1"/>
</dbReference>
<dbReference type="Gene3D" id="1.10.8.60">
    <property type="match status" value="1"/>
</dbReference>
<dbReference type="Gene3D" id="3.40.50.300">
    <property type="entry name" value="P-loop containing nucleotide triphosphate hydrolases"/>
    <property type="match status" value="1"/>
</dbReference>
<dbReference type="Gene3D" id="1.10.10.10">
    <property type="entry name" value="Winged helix-like DNA-binding domain superfamily/Winged helix DNA-binding domain"/>
    <property type="match status" value="1"/>
</dbReference>
<dbReference type="HAMAP" id="MF_00016">
    <property type="entry name" value="DNA_HJ_migration_RuvB"/>
    <property type="match status" value="1"/>
</dbReference>
<dbReference type="InterPro" id="IPR003593">
    <property type="entry name" value="AAA+_ATPase"/>
</dbReference>
<dbReference type="InterPro" id="IPR041445">
    <property type="entry name" value="AAA_lid_4"/>
</dbReference>
<dbReference type="InterPro" id="IPR004605">
    <property type="entry name" value="DNA_helicase_Holl-junc_RuvB"/>
</dbReference>
<dbReference type="InterPro" id="IPR027417">
    <property type="entry name" value="P-loop_NTPase"/>
</dbReference>
<dbReference type="InterPro" id="IPR008824">
    <property type="entry name" value="RuvB-like_N"/>
</dbReference>
<dbReference type="InterPro" id="IPR008823">
    <property type="entry name" value="RuvB_C"/>
</dbReference>
<dbReference type="InterPro" id="IPR036388">
    <property type="entry name" value="WH-like_DNA-bd_sf"/>
</dbReference>
<dbReference type="InterPro" id="IPR036390">
    <property type="entry name" value="WH_DNA-bd_sf"/>
</dbReference>
<dbReference type="NCBIfam" id="NF000868">
    <property type="entry name" value="PRK00080.1"/>
    <property type="match status" value="1"/>
</dbReference>
<dbReference type="NCBIfam" id="TIGR00635">
    <property type="entry name" value="ruvB"/>
    <property type="match status" value="1"/>
</dbReference>
<dbReference type="PANTHER" id="PTHR42848">
    <property type="match status" value="1"/>
</dbReference>
<dbReference type="PANTHER" id="PTHR42848:SF1">
    <property type="entry name" value="HOLLIDAY JUNCTION BRANCH MIGRATION COMPLEX SUBUNIT RUVB"/>
    <property type="match status" value="1"/>
</dbReference>
<dbReference type="Pfam" id="PF17864">
    <property type="entry name" value="AAA_lid_4"/>
    <property type="match status" value="1"/>
</dbReference>
<dbReference type="Pfam" id="PF05491">
    <property type="entry name" value="RuvB_C"/>
    <property type="match status" value="1"/>
</dbReference>
<dbReference type="Pfam" id="PF05496">
    <property type="entry name" value="RuvB_N"/>
    <property type="match status" value="1"/>
</dbReference>
<dbReference type="SMART" id="SM00382">
    <property type="entry name" value="AAA"/>
    <property type="match status" value="1"/>
</dbReference>
<dbReference type="SUPFAM" id="SSF52540">
    <property type="entry name" value="P-loop containing nucleoside triphosphate hydrolases"/>
    <property type="match status" value="1"/>
</dbReference>
<dbReference type="SUPFAM" id="SSF46785">
    <property type="entry name" value="Winged helix' DNA-binding domain"/>
    <property type="match status" value="1"/>
</dbReference>